<organism>
    <name type="scientific">Drosophila teissieri</name>
    <name type="common">Fruit fly</name>
    <dbReference type="NCBI Taxonomy" id="7243"/>
    <lineage>
        <taxon>Eukaryota</taxon>
        <taxon>Metazoa</taxon>
        <taxon>Ecdysozoa</taxon>
        <taxon>Arthropoda</taxon>
        <taxon>Hexapoda</taxon>
        <taxon>Insecta</taxon>
        <taxon>Pterygota</taxon>
        <taxon>Neoptera</taxon>
        <taxon>Endopterygota</taxon>
        <taxon>Diptera</taxon>
        <taxon>Brachycera</taxon>
        <taxon>Muscomorpha</taxon>
        <taxon>Ephydroidea</taxon>
        <taxon>Drosophilidae</taxon>
        <taxon>Drosophila</taxon>
        <taxon>Sophophora</taxon>
    </lineage>
</organism>
<reference evidence="4" key="1">
    <citation type="journal article" date="2007" name="J. Cell Sci.">
        <title>Mitch a rapidly evolving component of the Ndc80 kinetochore complex required for correct chromosome segregation in Drosophila.</title>
        <authorList>
            <person name="Williams B."/>
            <person name="Leung G."/>
            <person name="Maiato H."/>
            <person name="Wong A."/>
            <person name="Li Z."/>
            <person name="Williams E.V."/>
            <person name="Kirkpatrick C."/>
            <person name="Aquadro C.F."/>
            <person name="Rieder C.L."/>
            <person name="Goldberg M.L."/>
        </authorList>
    </citation>
    <scope>NUCLEOTIDE SEQUENCE [GENOMIC DNA]</scope>
</reference>
<feature type="chain" id="PRO_0000392427" description="Kinetochore protein Spc25">
    <location>
        <begin position="1"/>
        <end position="223"/>
    </location>
</feature>
<feature type="coiled-coil region" evidence="3">
    <location>
        <begin position="51"/>
        <end position="119"/>
    </location>
</feature>
<proteinExistence type="inferred from homology"/>
<keyword id="KW-0131">Cell cycle</keyword>
<keyword id="KW-0132">Cell division</keyword>
<keyword id="KW-0137">Centromere</keyword>
<keyword id="KW-0158">Chromosome</keyword>
<keyword id="KW-0175">Coiled coil</keyword>
<keyword id="KW-0995">Kinetochore</keyword>
<keyword id="KW-0469">Meiosis</keyword>
<keyword id="KW-0498">Mitosis</keyword>
<keyword id="KW-0539">Nucleus</keyword>
<dbReference type="EMBL" id="AY714310">
    <property type="protein sequence ID" value="AAU15004.1"/>
    <property type="molecule type" value="Genomic_DNA"/>
</dbReference>
<dbReference type="SMR" id="Q64EW3"/>
<dbReference type="GO" id="GO:0031262">
    <property type="term" value="C:Ndc80 complex"/>
    <property type="evidence" value="ECO:0000250"/>
    <property type="project" value="UniProtKB"/>
</dbReference>
<dbReference type="GO" id="GO:0005634">
    <property type="term" value="C:nucleus"/>
    <property type="evidence" value="ECO:0007669"/>
    <property type="project" value="UniProtKB-SubCell"/>
</dbReference>
<dbReference type="GO" id="GO:0051301">
    <property type="term" value="P:cell division"/>
    <property type="evidence" value="ECO:0007669"/>
    <property type="project" value="UniProtKB-KW"/>
</dbReference>
<dbReference type="GO" id="GO:0051311">
    <property type="term" value="P:meiotic metaphase chromosome alignment"/>
    <property type="evidence" value="ECO:0000250"/>
    <property type="project" value="UniProtKB"/>
</dbReference>
<dbReference type="GO" id="GO:0000212">
    <property type="term" value="P:meiotic spindle organization"/>
    <property type="evidence" value="ECO:0000250"/>
    <property type="project" value="UniProtKB"/>
</dbReference>
<dbReference type="GO" id="GO:0007080">
    <property type="term" value="P:mitotic metaphase chromosome alignment"/>
    <property type="evidence" value="ECO:0000250"/>
    <property type="project" value="UniProtKB"/>
</dbReference>
<evidence type="ECO:0000250" key="1">
    <source>
        <dbReference type="UniProtKB" id="Q9HBM1"/>
    </source>
</evidence>
<evidence type="ECO:0000250" key="2">
    <source>
        <dbReference type="UniProtKB" id="Q9V3V7"/>
    </source>
</evidence>
<evidence type="ECO:0000255" key="3"/>
<evidence type="ECO:0000312" key="4">
    <source>
        <dbReference type="EMBL" id="AAU15004.1"/>
    </source>
</evidence>
<sequence length="223" mass="25648">MAIIIPESSYERRVKALYEKQIRMEALEGKFIKKVYKFNSNLLDVKEAVLRHQRKVGKLQKVVMERREELEKRVSFMEELAQELEATKLRNLAMKEQIKQRKMIARQRKNEIMERIQTLSKTTGTYVNQEALPARVKGVTVLRGDKRDQLIPFDLNATDAEGLNSLCQHLESLNVDVSQWQQLVSLAMDVAMEARAPTTPPKEVANCKSIIEIDLTSPTSHQA</sequence>
<gene>
    <name evidence="2" type="primary">Spc25</name>
    <name evidence="4" type="synonym">mitch</name>
</gene>
<name>SPC25_DROTE</name>
<accession>Q64EW3</accession>
<protein>
    <recommendedName>
        <fullName evidence="2">Kinetochore protein Spc25</fullName>
    </recommendedName>
</protein>
<comment type="function">
    <text evidence="1 2">Acts as a component of the essential kinetochore-associated Ndc80 complex, which is required for chromosome segregation and spindle checkpoint activity during meiosis and mitosis. Required for kinetochore integrity and the organization of stable microtubule binding sites in the outer plate of the kinetochore. Participates in SAC signaling that responds specifically to disruptions in spindle microtubule dynamics. The NDC80 complex synergistically enhances the affinity of the SKA1 complex for microtubules and may allow the NDC80 complex to track depolymerizing microtubules.</text>
</comment>
<comment type="subunit">
    <text evidence="2">Component of the Ndc80 complex, which is composed of Ndc80, Nuf2 and Spc25.</text>
</comment>
<comment type="subcellular location">
    <subcellularLocation>
        <location evidence="2">Nucleus</location>
    </subcellularLocation>
    <subcellularLocation>
        <location evidence="2">Chromosome</location>
        <location evidence="2">Centromere</location>
        <location evidence="2">Kinetochore</location>
    </subcellularLocation>
</comment>
<comment type="similarity">
    <text evidence="3">Belongs to the SPC25 family.</text>
</comment>